<protein>
    <recommendedName>
        <fullName evidence="1">2-succinyl-5-enolpyruvyl-6-hydroxy-3-cyclohexene-1-carboxylate synthase</fullName>
        <shortName evidence="1">SEPHCHC synthase</shortName>
        <ecNumber evidence="1">2.2.1.9</ecNumber>
    </recommendedName>
    <alternativeName>
        <fullName evidence="1">Menaquinone biosynthesis protein MenD</fullName>
    </alternativeName>
</protein>
<evidence type="ECO:0000255" key="1">
    <source>
        <dbReference type="HAMAP-Rule" id="MF_01659"/>
    </source>
</evidence>
<comment type="function">
    <text evidence="1">Catalyzes the thiamine diphosphate-dependent decarboxylation of 2-oxoglutarate and the subsequent addition of the resulting succinic semialdehyde-thiamine pyrophosphate anion to isochorismate to yield 2-succinyl-5-enolpyruvyl-6-hydroxy-3-cyclohexene-1-carboxylate (SEPHCHC).</text>
</comment>
<comment type="catalytic activity">
    <reaction evidence="1">
        <text>isochorismate + 2-oxoglutarate + H(+) = 5-enolpyruvoyl-6-hydroxy-2-succinyl-cyclohex-3-ene-1-carboxylate + CO2</text>
        <dbReference type="Rhea" id="RHEA:25593"/>
        <dbReference type="ChEBI" id="CHEBI:15378"/>
        <dbReference type="ChEBI" id="CHEBI:16526"/>
        <dbReference type="ChEBI" id="CHEBI:16810"/>
        <dbReference type="ChEBI" id="CHEBI:29780"/>
        <dbReference type="ChEBI" id="CHEBI:58818"/>
        <dbReference type="EC" id="2.2.1.9"/>
    </reaction>
</comment>
<comment type="cofactor">
    <cofactor evidence="1">
        <name>Mg(2+)</name>
        <dbReference type="ChEBI" id="CHEBI:18420"/>
    </cofactor>
    <cofactor evidence="1">
        <name>Mn(2+)</name>
        <dbReference type="ChEBI" id="CHEBI:29035"/>
    </cofactor>
</comment>
<comment type="cofactor">
    <cofactor evidence="1">
        <name>thiamine diphosphate</name>
        <dbReference type="ChEBI" id="CHEBI:58937"/>
    </cofactor>
    <text evidence="1">Binds 1 thiamine pyrophosphate per subunit.</text>
</comment>
<comment type="pathway">
    <text evidence="1">Quinol/quinone metabolism; 1,4-dihydroxy-2-naphthoate biosynthesis; 1,4-dihydroxy-2-naphthoate from chorismate: step 2/7.</text>
</comment>
<comment type="pathway">
    <text evidence="1">Quinol/quinone metabolism; menaquinone biosynthesis.</text>
</comment>
<comment type="subunit">
    <text evidence="1">Homodimer.</text>
</comment>
<comment type="similarity">
    <text evidence="1">Belongs to the TPP enzyme family. MenD subfamily.</text>
</comment>
<feature type="chain" id="PRO_1000215858" description="2-succinyl-5-enolpyruvyl-6-hydroxy-3-cyclohexene-1-carboxylate synthase">
    <location>
        <begin position="1"/>
        <end position="556"/>
    </location>
</feature>
<accession>C4ZUA7</accession>
<proteinExistence type="inferred from homology"/>
<gene>
    <name evidence="1" type="primary">menD</name>
    <name type="ordered locus">BWG_2038</name>
</gene>
<name>MEND_ECOBW</name>
<reference key="1">
    <citation type="journal article" date="2009" name="J. Bacteriol.">
        <title>Genomic sequencing reveals regulatory mutations and recombinational events in the widely used MC4100 lineage of Escherichia coli K-12.</title>
        <authorList>
            <person name="Ferenci T."/>
            <person name="Zhou Z."/>
            <person name="Betteridge T."/>
            <person name="Ren Y."/>
            <person name="Liu Y."/>
            <person name="Feng L."/>
            <person name="Reeves P.R."/>
            <person name="Wang L."/>
        </authorList>
    </citation>
    <scope>NUCLEOTIDE SEQUENCE [LARGE SCALE GENOMIC DNA]</scope>
    <source>
        <strain>K12 / MC4100 / BW2952</strain>
    </source>
</reference>
<dbReference type="EC" id="2.2.1.9" evidence="1"/>
<dbReference type="EMBL" id="CP001396">
    <property type="protein sequence ID" value="ACR62066.1"/>
    <property type="molecule type" value="Genomic_DNA"/>
</dbReference>
<dbReference type="RefSeq" id="WP_001295284.1">
    <property type="nucleotide sequence ID" value="NC_012759.1"/>
</dbReference>
<dbReference type="SMR" id="C4ZUA7"/>
<dbReference type="KEGG" id="ebw:BWG_2038"/>
<dbReference type="HOGENOM" id="CLU_006051_3_0_6"/>
<dbReference type="UniPathway" id="UPA00079"/>
<dbReference type="UniPathway" id="UPA01057">
    <property type="reaction ID" value="UER00164"/>
</dbReference>
<dbReference type="GO" id="GO:0070204">
    <property type="term" value="F:2-succinyl-5-enolpyruvyl-6-hydroxy-3-cyclohexene-1-carboxylic-acid synthase activity"/>
    <property type="evidence" value="ECO:0007669"/>
    <property type="project" value="UniProtKB-UniRule"/>
</dbReference>
<dbReference type="GO" id="GO:0000287">
    <property type="term" value="F:magnesium ion binding"/>
    <property type="evidence" value="ECO:0007669"/>
    <property type="project" value="UniProtKB-UniRule"/>
</dbReference>
<dbReference type="GO" id="GO:0030145">
    <property type="term" value="F:manganese ion binding"/>
    <property type="evidence" value="ECO:0007669"/>
    <property type="project" value="UniProtKB-UniRule"/>
</dbReference>
<dbReference type="GO" id="GO:0030976">
    <property type="term" value="F:thiamine pyrophosphate binding"/>
    <property type="evidence" value="ECO:0007669"/>
    <property type="project" value="UniProtKB-UniRule"/>
</dbReference>
<dbReference type="GO" id="GO:0009234">
    <property type="term" value="P:menaquinone biosynthetic process"/>
    <property type="evidence" value="ECO:0007669"/>
    <property type="project" value="UniProtKB-UniRule"/>
</dbReference>
<dbReference type="CDD" id="cd07037">
    <property type="entry name" value="TPP_PYR_MenD"/>
    <property type="match status" value="1"/>
</dbReference>
<dbReference type="CDD" id="cd02009">
    <property type="entry name" value="TPP_SHCHC_synthase"/>
    <property type="match status" value="1"/>
</dbReference>
<dbReference type="FunFam" id="3.40.50.1220:FF:000010">
    <property type="entry name" value="2-succinyl-5-enolpyruvyl-6-hydroxy-3-cyclohexene-1-carboxylate synthase"/>
    <property type="match status" value="1"/>
</dbReference>
<dbReference type="FunFam" id="3.40.50.970:FF:000029">
    <property type="entry name" value="2-succinyl-5-enolpyruvyl-6-hydroxy-3-cyclohexene-1-carboxylate synthase"/>
    <property type="match status" value="1"/>
</dbReference>
<dbReference type="FunFam" id="3.40.50.970:FF:000035">
    <property type="entry name" value="2-succinyl-5-enolpyruvyl-6-hydroxy-3-cyclohexene-1-carboxylate synthase"/>
    <property type="match status" value="1"/>
</dbReference>
<dbReference type="Gene3D" id="3.40.50.970">
    <property type="match status" value="2"/>
</dbReference>
<dbReference type="Gene3D" id="3.40.50.1220">
    <property type="entry name" value="TPP-binding domain"/>
    <property type="match status" value="1"/>
</dbReference>
<dbReference type="HAMAP" id="MF_01659">
    <property type="entry name" value="MenD"/>
    <property type="match status" value="1"/>
</dbReference>
<dbReference type="InterPro" id="IPR004433">
    <property type="entry name" value="MenaQ_synth_MenD"/>
</dbReference>
<dbReference type="InterPro" id="IPR032264">
    <property type="entry name" value="MenD_middle"/>
</dbReference>
<dbReference type="InterPro" id="IPR029061">
    <property type="entry name" value="THDP-binding"/>
</dbReference>
<dbReference type="InterPro" id="IPR012001">
    <property type="entry name" value="Thiamin_PyroP_enz_TPP-bd_dom"/>
</dbReference>
<dbReference type="InterPro" id="IPR011766">
    <property type="entry name" value="TPP_enzyme_TPP-bd"/>
</dbReference>
<dbReference type="NCBIfam" id="TIGR00173">
    <property type="entry name" value="menD"/>
    <property type="match status" value="1"/>
</dbReference>
<dbReference type="PANTHER" id="PTHR42916">
    <property type="entry name" value="2-SUCCINYL-5-ENOLPYRUVYL-6-HYDROXY-3-CYCLOHEXENE-1-CARBOXYLATE SYNTHASE"/>
    <property type="match status" value="1"/>
</dbReference>
<dbReference type="PANTHER" id="PTHR42916:SF1">
    <property type="entry name" value="PROTEIN PHYLLO, CHLOROPLASTIC"/>
    <property type="match status" value="1"/>
</dbReference>
<dbReference type="Pfam" id="PF02775">
    <property type="entry name" value="TPP_enzyme_C"/>
    <property type="match status" value="1"/>
</dbReference>
<dbReference type="Pfam" id="PF16582">
    <property type="entry name" value="TPP_enzyme_M_2"/>
    <property type="match status" value="1"/>
</dbReference>
<dbReference type="Pfam" id="PF02776">
    <property type="entry name" value="TPP_enzyme_N"/>
    <property type="match status" value="1"/>
</dbReference>
<dbReference type="PIRSF" id="PIRSF004983">
    <property type="entry name" value="MenD"/>
    <property type="match status" value="1"/>
</dbReference>
<dbReference type="SUPFAM" id="SSF52518">
    <property type="entry name" value="Thiamin diphosphate-binding fold (THDP-binding)"/>
    <property type="match status" value="2"/>
</dbReference>
<sequence length="556" mass="61367">MSVSAFNRRWAAVILEALTRHGVRHICIAPGSRSTPLTLAAAENSAFIHHTHFDERGLGHLALGLAKVSKQPVAVIVTSGTAVANLYPALIEAGLTGEKLILLTADRPPELIDCGANQAIRQPGMFASHPTHSISLPRPTQDIPARWLVSTIDHALGTLHAGGVHINCPFAEPLYGEMDDTGLSWQQRLGDWWQDDKPWLREAPRLESEKQRDWFFWRQKRGVVVAGRMSAEEGKKVALWAQTLGWPLIGDVLSQTGQPLPCADLWLGNAKATSELQQAQIVVQLGSSLTGKRLLQWQASCEPEEYWIVDDIEGRLDPAHHRGRRLIANIADWLELHPAEKRQPWCVEIPRLAEQAMQAVIARRDAFGEAQLAHRICDYLPEQGQLFVGNSLVVRLIDALSQLPAGYPVYSNRGASGIDGLLSTAAGVQRASGKPTLAIVGDLSALYDLNALALLRQVSAPLVLIVVNNNGGQIFSLLPTPQSERERFYLMPQNVHFEHAAAMFELKYHRPQNWQELETAFADAWRTPTTTVIEMVVNDTDGAQTLQQLLAQVSHL</sequence>
<organism>
    <name type="scientific">Escherichia coli (strain K12 / MC4100 / BW2952)</name>
    <dbReference type="NCBI Taxonomy" id="595496"/>
    <lineage>
        <taxon>Bacteria</taxon>
        <taxon>Pseudomonadati</taxon>
        <taxon>Pseudomonadota</taxon>
        <taxon>Gammaproteobacteria</taxon>
        <taxon>Enterobacterales</taxon>
        <taxon>Enterobacteriaceae</taxon>
        <taxon>Escherichia</taxon>
    </lineage>
</organism>
<keyword id="KW-0460">Magnesium</keyword>
<keyword id="KW-0464">Manganese</keyword>
<keyword id="KW-0474">Menaquinone biosynthesis</keyword>
<keyword id="KW-0479">Metal-binding</keyword>
<keyword id="KW-0786">Thiamine pyrophosphate</keyword>
<keyword id="KW-0808">Transferase</keyword>